<proteinExistence type="inferred from homology"/>
<organism>
    <name type="scientific">Anaplasma phagocytophilum (strain HZ)</name>
    <dbReference type="NCBI Taxonomy" id="212042"/>
    <lineage>
        <taxon>Bacteria</taxon>
        <taxon>Pseudomonadati</taxon>
        <taxon>Pseudomonadota</taxon>
        <taxon>Alphaproteobacteria</taxon>
        <taxon>Rickettsiales</taxon>
        <taxon>Anaplasmataceae</taxon>
        <taxon>Anaplasma</taxon>
        <taxon>phagocytophilum group</taxon>
    </lineage>
</organism>
<comment type="function">
    <text evidence="1">NDH-1 shuttles electrons from NADH, via FMN and iron-sulfur (Fe-S) centers, to quinones in the respiratory chain. The immediate electron acceptor for the enzyme in this species is believed to be ubiquinone. Couples the redox reaction to proton translocation (for every two electrons transferred, four hydrogen ions are translocated across the cytoplasmic membrane), and thus conserves the redox energy in a proton gradient.</text>
</comment>
<comment type="catalytic activity">
    <reaction evidence="1">
        <text>a quinone + NADH + 5 H(+)(in) = a quinol + NAD(+) + 4 H(+)(out)</text>
        <dbReference type="Rhea" id="RHEA:57888"/>
        <dbReference type="ChEBI" id="CHEBI:15378"/>
        <dbReference type="ChEBI" id="CHEBI:24646"/>
        <dbReference type="ChEBI" id="CHEBI:57540"/>
        <dbReference type="ChEBI" id="CHEBI:57945"/>
        <dbReference type="ChEBI" id="CHEBI:132124"/>
    </reaction>
</comment>
<comment type="cofactor">
    <cofactor evidence="1">
        <name>[4Fe-4S] cluster</name>
        <dbReference type="ChEBI" id="CHEBI:49883"/>
    </cofactor>
    <text evidence="1">Binds 1 [4Fe-4S] cluster.</text>
</comment>
<comment type="subunit">
    <text evidence="1">NDH-1 is composed of 14 different subunits. Subunits NuoB, C, D, E, F, and G constitute the peripheral sector of the complex.</text>
</comment>
<comment type="subcellular location">
    <subcellularLocation>
        <location evidence="1">Cell inner membrane</location>
        <topology evidence="1">Peripheral membrane protein</topology>
        <orientation evidence="1">Cytoplasmic side</orientation>
    </subcellularLocation>
</comment>
<comment type="similarity">
    <text evidence="1">Belongs to the complex I 20 kDa subunit family.</text>
</comment>
<evidence type="ECO:0000255" key="1">
    <source>
        <dbReference type="HAMAP-Rule" id="MF_01356"/>
    </source>
</evidence>
<sequence>MGECDQILENDLWQGYKDQGFVVTQFSDLIERVLKWARSGSLWPMTFGLACCAVEMMHTAASRYDLDRYGIMFRASPRQADVMIVAGTLTNKMAPALRRVYDQMADPKYVISMGSCANGGGYYHYSYSVVRGCDRVVPVDIYVPGCPPTAEALLYGLLCLQQKILRNGQGTWRA</sequence>
<feature type="chain" id="PRO_0000376123" description="NADH-quinone oxidoreductase subunit B">
    <location>
        <begin position="1"/>
        <end position="174"/>
    </location>
</feature>
<feature type="binding site" evidence="1">
    <location>
        <position position="51"/>
    </location>
    <ligand>
        <name>[4Fe-4S] cluster</name>
        <dbReference type="ChEBI" id="CHEBI:49883"/>
    </ligand>
</feature>
<feature type="binding site" evidence="1">
    <location>
        <position position="52"/>
    </location>
    <ligand>
        <name>[4Fe-4S] cluster</name>
        <dbReference type="ChEBI" id="CHEBI:49883"/>
    </ligand>
</feature>
<feature type="binding site" evidence="1">
    <location>
        <position position="116"/>
    </location>
    <ligand>
        <name>[4Fe-4S] cluster</name>
        <dbReference type="ChEBI" id="CHEBI:49883"/>
    </ligand>
</feature>
<feature type="binding site" evidence="1">
    <location>
        <position position="146"/>
    </location>
    <ligand>
        <name>[4Fe-4S] cluster</name>
        <dbReference type="ChEBI" id="CHEBI:49883"/>
    </ligand>
</feature>
<gene>
    <name evidence="1" type="primary">nuoB</name>
    <name type="ordered locus">APH_0520</name>
</gene>
<accession>Q2GKI6</accession>
<name>NUOB_ANAPZ</name>
<reference key="1">
    <citation type="journal article" date="2006" name="PLoS Genet.">
        <title>Comparative genomics of emerging human ehrlichiosis agents.</title>
        <authorList>
            <person name="Dunning Hotopp J.C."/>
            <person name="Lin M."/>
            <person name="Madupu R."/>
            <person name="Crabtree J."/>
            <person name="Angiuoli S.V."/>
            <person name="Eisen J.A."/>
            <person name="Seshadri R."/>
            <person name="Ren Q."/>
            <person name="Wu M."/>
            <person name="Utterback T.R."/>
            <person name="Smith S."/>
            <person name="Lewis M."/>
            <person name="Khouri H."/>
            <person name="Zhang C."/>
            <person name="Niu H."/>
            <person name="Lin Q."/>
            <person name="Ohashi N."/>
            <person name="Zhi N."/>
            <person name="Nelson W.C."/>
            <person name="Brinkac L.M."/>
            <person name="Dodson R.J."/>
            <person name="Rosovitz M.J."/>
            <person name="Sundaram J.P."/>
            <person name="Daugherty S.C."/>
            <person name="Davidsen T."/>
            <person name="Durkin A.S."/>
            <person name="Gwinn M.L."/>
            <person name="Haft D.H."/>
            <person name="Selengut J.D."/>
            <person name="Sullivan S.A."/>
            <person name="Zafar N."/>
            <person name="Zhou L."/>
            <person name="Benahmed F."/>
            <person name="Forberger H."/>
            <person name="Halpin R."/>
            <person name="Mulligan S."/>
            <person name="Robinson J."/>
            <person name="White O."/>
            <person name="Rikihisa Y."/>
            <person name="Tettelin H."/>
        </authorList>
    </citation>
    <scope>NUCLEOTIDE SEQUENCE [LARGE SCALE GENOMIC DNA]</scope>
    <source>
        <strain>HZ</strain>
    </source>
</reference>
<dbReference type="EC" id="7.1.1.-" evidence="1"/>
<dbReference type="EMBL" id="CP000235">
    <property type="protein sequence ID" value="ABD44308.1"/>
    <property type="molecule type" value="Genomic_DNA"/>
</dbReference>
<dbReference type="RefSeq" id="WP_011450637.1">
    <property type="nucleotide sequence ID" value="NC_007797.1"/>
</dbReference>
<dbReference type="SMR" id="Q2GKI6"/>
<dbReference type="STRING" id="212042.APH_0520"/>
<dbReference type="PaxDb" id="212042-APH_0520"/>
<dbReference type="EnsemblBacteria" id="ABD44308">
    <property type="protein sequence ID" value="ABD44308"/>
    <property type="gene ID" value="APH_0520"/>
</dbReference>
<dbReference type="KEGG" id="aph:APH_0520"/>
<dbReference type="eggNOG" id="COG0377">
    <property type="taxonomic scope" value="Bacteria"/>
</dbReference>
<dbReference type="HOGENOM" id="CLU_055737_7_0_5"/>
<dbReference type="Proteomes" id="UP000001943">
    <property type="component" value="Chromosome"/>
</dbReference>
<dbReference type="GO" id="GO:0005886">
    <property type="term" value="C:plasma membrane"/>
    <property type="evidence" value="ECO:0007669"/>
    <property type="project" value="UniProtKB-SubCell"/>
</dbReference>
<dbReference type="GO" id="GO:0045271">
    <property type="term" value="C:respiratory chain complex I"/>
    <property type="evidence" value="ECO:0007669"/>
    <property type="project" value="TreeGrafter"/>
</dbReference>
<dbReference type="GO" id="GO:0051539">
    <property type="term" value="F:4 iron, 4 sulfur cluster binding"/>
    <property type="evidence" value="ECO:0007669"/>
    <property type="project" value="UniProtKB-KW"/>
</dbReference>
<dbReference type="GO" id="GO:0005506">
    <property type="term" value="F:iron ion binding"/>
    <property type="evidence" value="ECO:0007669"/>
    <property type="project" value="UniProtKB-UniRule"/>
</dbReference>
<dbReference type="GO" id="GO:0008137">
    <property type="term" value="F:NADH dehydrogenase (ubiquinone) activity"/>
    <property type="evidence" value="ECO:0007669"/>
    <property type="project" value="InterPro"/>
</dbReference>
<dbReference type="GO" id="GO:0050136">
    <property type="term" value="F:NADH:ubiquinone reductase (non-electrogenic) activity"/>
    <property type="evidence" value="ECO:0007669"/>
    <property type="project" value="UniProtKB-UniRule"/>
</dbReference>
<dbReference type="GO" id="GO:0048038">
    <property type="term" value="F:quinone binding"/>
    <property type="evidence" value="ECO:0007669"/>
    <property type="project" value="UniProtKB-KW"/>
</dbReference>
<dbReference type="GO" id="GO:0009060">
    <property type="term" value="P:aerobic respiration"/>
    <property type="evidence" value="ECO:0007669"/>
    <property type="project" value="TreeGrafter"/>
</dbReference>
<dbReference type="GO" id="GO:0015990">
    <property type="term" value="P:electron transport coupled proton transport"/>
    <property type="evidence" value="ECO:0007669"/>
    <property type="project" value="TreeGrafter"/>
</dbReference>
<dbReference type="FunFam" id="3.40.50.12280:FF:000001">
    <property type="entry name" value="NADH-quinone oxidoreductase subunit B 2"/>
    <property type="match status" value="1"/>
</dbReference>
<dbReference type="Gene3D" id="3.40.50.12280">
    <property type="match status" value="1"/>
</dbReference>
<dbReference type="HAMAP" id="MF_01356">
    <property type="entry name" value="NDH1_NuoB"/>
    <property type="match status" value="1"/>
</dbReference>
<dbReference type="InterPro" id="IPR006137">
    <property type="entry name" value="NADH_UbQ_OxRdtase-like_20kDa"/>
</dbReference>
<dbReference type="InterPro" id="IPR006138">
    <property type="entry name" value="NADH_UQ_OxRdtase_20Kd_su"/>
</dbReference>
<dbReference type="NCBIfam" id="TIGR01957">
    <property type="entry name" value="nuoB_fam"/>
    <property type="match status" value="1"/>
</dbReference>
<dbReference type="NCBIfam" id="NF005012">
    <property type="entry name" value="PRK06411.1"/>
    <property type="match status" value="1"/>
</dbReference>
<dbReference type="PANTHER" id="PTHR11995">
    <property type="entry name" value="NADH DEHYDROGENASE"/>
    <property type="match status" value="1"/>
</dbReference>
<dbReference type="PANTHER" id="PTHR11995:SF14">
    <property type="entry name" value="NADH DEHYDROGENASE [UBIQUINONE] IRON-SULFUR PROTEIN 7, MITOCHONDRIAL"/>
    <property type="match status" value="1"/>
</dbReference>
<dbReference type="Pfam" id="PF01058">
    <property type="entry name" value="Oxidored_q6"/>
    <property type="match status" value="1"/>
</dbReference>
<dbReference type="SUPFAM" id="SSF56770">
    <property type="entry name" value="HydA/Nqo6-like"/>
    <property type="match status" value="1"/>
</dbReference>
<dbReference type="PROSITE" id="PS01150">
    <property type="entry name" value="COMPLEX1_20K"/>
    <property type="match status" value="1"/>
</dbReference>
<keyword id="KW-0004">4Fe-4S</keyword>
<keyword id="KW-0997">Cell inner membrane</keyword>
<keyword id="KW-1003">Cell membrane</keyword>
<keyword id="KW-0408">Iron</keyword>
<keyword id="KW-0411">Iron-sulfur</keyword>
<keyword id="KW-0472">Membrane</keyword>
<keyword id="KW-0479">Metal-binding</keyword>
<keyword id="KW-0520">NAD</keyword>
<keyword id="KW-0874">Quinone</keyword>
<keyword id="KW-1278">Translocase</keyword>
<keyword id="KW-0813">Transport</keyword>
<keyword id="KW-0830">Ubiquinone</keyword>
<protein>
    <recommendedName>
        <fullName evidence="1">NADH-quinone oxidoreductase subunit B</fullName>
        <ecNumber evidence="1">7.1.1.-</ecNumber>
    </recommendedName>
    <alternativeName>
        <fullName evidence="1">NADH dehydrogenase I subunit B</fullName>
    </alternativeName>
    <alternativeName>
        <fullName evidence="1">NDH-1 subunit B</fullName>
    </alternativeName>
</protein>